<organism>
    <name type="scientific">Lyophyllum shimeji</name>
    <name type="common">Hon-shimeji</name>
    <name type="synonym">Tricholoma shimeji</name>
    <dbReference type="NCBI Taxonomy" id="47721"/>
    <lineage>
        <taxon>Eukaryota</taxon>
        <taxon>Fungi</taxon>
        <taxon>Dikarya</taxon>
        <taxon>Basidiomycota</taxon>
        <taxon>Agaricomycotina</taxon>
        <taxon>Agaricomycetes</taxon>
        <taxon>Agaricomycetidae</taxon>
        <taxon>Agaricales</taxon>
        <taxon>Tricholomatineae</taxon>
        <taxon>Lyophyllaceae</taxon>
        <taxon>Lyophyllum</taxon>
    </lineage>
</organism>
<comment type="function">
    <text evidence="1">Catalyzes the oxidation of various aldopyranoses and disaccharides on carbon-2 to the corresponding 2-keto sugars concomitant with the reduction of O(2) to H(2)O(2).</text>
</comment>
<comment type="catalytic activity">
    <reaction>
        <text>D-glucose + O2 = 2-dehydro-D-glucose + H2O2</text>
        <dbReference type="Rhea" id="RHEA:10552"/>
        <dbReference type="ChEBI" id="CHEBI:4167"/>
        <dbReference type="ChEBI" id="CHEBI:15379"/>
        <dbReference type="ChEBI" id="CHEBI:16240"/>
        <dbReference type="ChEBI" id="CHEBI:16609"/>
        <dbReference type="EC" id="1.1.3.10"/>
    </reaction>
</comment>
<comment type="cofactor">
    <cofactor evidence="1">
        <name>FAD</name>
        <dbReference type="ChEBI" id="CHEBI:57692"/>
    </cofactor>
    <text evidence="1">Binds 1 FAD covalently per subunit.</text>
</comment>
<comment type="subunit">
    <text evidence="1">Homotetramer.</text>
</comment>
<comment type="similarity">
    <text evidence="3">Belongs to the GMC oxidoreductase family.</text>
</comment>
<feature type="chain" id="PRO_0000205613" description="Pyranose 2-oxidase">
    <location>
        <begin position="1"/>
        <end position="618"/>
    </location>
</feature>
<feature type="active site" description="Proton acceptor" evidence="2">
    <location>
        <position position="540"/>
    </location>
</feature>
<feature type="active site" evidence="1">
    <location>
        <position position="583"/>
    </location>
</feature>
<feature type="binding site" evidence="1">
    <location>
        <position position="441"/>
    </location>
    <ligand>
        <name>substrate</name>
    </ligand>
</feature>
<feature type="binding site" evidence="1">
    <location>
        <position position="443"/>
    </location>
    <ligand>
        <name>substrate</name>
    </ligand>
</feature>
<feature type="modified residue" description="Tele-8alpha-FAD histidine" evidence="1">
    <location>
        <position position="170"/>
    </location>
</feature>
<keyword id="KW-0274">FAD</keyword>
<keyword id="KW-0285">Flavoprotein</keyword>
<keyword id="KW-0560">Oxidoreductase</keyword>
<gene>
    <name type="primary">p2ox</name>
    <name type="synonym">lsp2o</name>
</gene>
<reference key="1">
    <citation type="submission" date="2003-09" db="EMBL/GenBank/DDBJ databases">
        <title>Identification and cloning of a novel pyranose oxidase with high catalytic activity from Lyophyllum shimeji and its expression in Escherichia coli.</title>
        <authorList>
            <person name="Takakura Y."/>
            <person name="Tsutsumi F."/>
            <person name="Inoue Y."/>
            <person name="Kuwata S."/>
        </authorList>
    </citation>
    <scope>NUCLEOTIDE SEQUENCE [MRNA]</scope>
</reference>
<sequence>MSLSTEQMLRDYPRSMQINGQIPKNAIHETYGNDGVDVFIAGSGPIGATYAKLCVEAGLRVVMVEIGAADSFYAVNAEEGTAVPYVPGYHKKNEIEFQKDIDRFVNVIKGALQQVSVPVRNQNVPTLDPGAWSAPPGSSAISNGKNPHQREFENLSAEAVTRGVGGMSTHWTCSTPRIHPPMESLPGIGRPKLSNDPAEDDKEWNELYSEAERLIGTSTKEFDESIRHTLVLRSLQDAYKDRQRIFRPLPLACHRLKNAPEYVEWHSAENLFHSIYNDDKQKKLFTLLTNHRCTRLALTGGYEKKIGAAEVRNLLATRNPSSQLDSYIMAKVYVLASGAIGNPQILYNSGFSGLQVTPRNDSLIPNLGRYITEQPMAFCQIVLRQEFVDSVRDDPYGLPWWKEAVAQHIAKNPTDALPIPFRDPEPQVTTPFTEEHPWHTQIHRDAFSYGAVGPEVDSRVIVDLRWFGATDPEANNLLVFQNDVQDGYSMPQPTFRYRPSTASNVRARKMMADMCEVASNLGGYLPTSPPQFMDPGLALHLAGTTRIGFDKATTVADNNSLVWDFANLYVAGNGTIRTGFGENPTLTSMCHAIKSARSIINTLKGGTDGKNTGEHRNL</sequence>
<proteinExistence type="evidence at transcript level"/>
<protein>
    <recommendedName>
        <fullName>Pyranose 2-oxidase</fullName>
        <shortName>P2Ox</shortName>
        <shortName>POD</shortName>
        <shortName>POx</shortName>
        <shortName>PROD</shortName>
        <shortName>Pyranose oxidase</shortName>
        <ecNumber>1.1.3.10</ecNumber>
    </recommendedName>
    <alternativeName>
        <fullName>FAD-oxidoreductase</fullName>
    </alternativeName>
    <alternativeName>
        <fullName>Glucose 2-oxidase</fullName>
    </alternativeName>
    <alternativeName>
        <fullName>Pyranose:oxygen 2-oxidoreductase</fullName>
    </alternativeName>
</protein>
<dbReference type="EC" id="1.1.3.10"/>
<dbReference type="EMBL" id="AB119106">
    <property type="protein sequence ID" value="BAD12079.1"/>
    <property type="molecule type" value="mRNA"/>
</dbReference>
<dbReference type="SMR" id="Q75ZP8"/>
<dbReference type="CAZy" id="AA3">
    <property type="family name" value="Auxiliary Activities 3"/>
</dbReference>
<dbReference type="BRENDA" id="1.1.3.10">
    <property type="organism ID" value="12323"/>
</dbReference>
<dbReference type="GO" id="GO:0050660">
    <property type="term" value="F:flavin adenine dinucleotide binding"/>
    <property type="evidence" value="ECO:0007669"/>
    <property type="project" value="InterPro"/>
</dbReference>
<dbReference type="GO" id="GO:0050233">
    <property type="term" value="F:pyranose oxidase activity"/>
    <property type="evidence" value="ECO:0007669"/>
    <property type="project" value="UniProtKB-EC"/>
</dbReference>
<dbReference type="Gene3D" id="3.50.50.60">
    <property type="entry name" value="FAD/NAD(P)-binding domain"/>
    <property type="match status" value="2"/>
</dbReference>
<dbReference type="InterPro" id="IPR036188">
    <property type="entry name" value="FAD/NAD-bd_sf"/>
</dbReference>
<dbReference type="InterPro" id="IPR007867">
    <property type="entry name" value="GMC_OxRtase_C"/>
</dbReference>
<dbReference type="InterPro" id="IPR012814">
    <property type="entry name" value="P2OX"/>
</dbReference>
<dbReference type="InterPro" id="IPR051473">
    <property type="entry name" value="P2Ox-like"/>
</dbReference>
<dbReference type="NCBIfam" id="TIGR02462">
    <property type="entry name" value="pyranose_ox"/>
    <property type="match status" value="1"/>
</dbReference>
<dbReference type="PANTHER" id="PTHR42784">
    <property type="entry name" value="PYRANOSE 2-OXIDASE"/>
    <property type="match status" value="1"/>
</dbReference>
<dbReference type="PANTHER" id="PTHR42784:SF1">
    <property type="entry name" value="PYRANOSE 2-OXIDASE"/>
    <property type="match status" value="1"/>
</dbReference>
<dbReference type="Pfam" id="PF05199">
    <property type="entry name" value="GMC_oxred_C"/>
    <property type="match status" value="1"/>
</dbReference>
<dbReference type="SUPFAM" id="SSF54373">
    <property type="entry name" value="FAD-linked reductases, C-terminal domain"/>
    <property type="match status" value="1"/>
</dbReference>
<dbReference type="SUPFAM" id="SSF51905">
    <property type="entry name" value="FAD/NAD(P)-binding domain"/>
    <property type="match status" value="1"/>
</dbReference>
<evidence type="ECO:0000250" key="1"/>
<evidence type="ECO:0000250" key="2">
    <source>
        <dbReference type="UniProtKB" id="E4QP00"/>
    </source>
</evidence>
<evidence type="ECO:0000305" key="3"/>
<accession>Q75ZP8</accession>
<name>P2OX_LYOSH</name>